<comment type="function">
    <text evidence="1">Functions in the N-end rule pathway of protein degradation where it conjugates Leu from its aminoacyl-tRNA to the N-termini of proteins containing an N-terminal aspartate or glutamate.</text>
</comment>
<comment type="catalytic activity">
    <reaction evidence="1">
        <text>N-terminal L-glutamyl-[protein] + L-leucyl-tRNA(Leu) = N-terminal L-leucyl-L-glutamyl-[protein] + tRNA(Leu) + H(+)</text>
        <dbReference type="Rhea" id="RHEA:50412"/>
        <dbReference type="Rhea" id="RHEA-COMP:9613"/>
        <dbReference type="Rhea" id="RHEA-COMP:9622"/>
        <dbReference type="Rhea" id="RHEA-COMP:12664"/>
        <dbReference type="Rhea" id="RHEA-COMP:12668"/>
        <dbReference type="ChEBI" id="CHEBI:15378"/>
        <dbReference type="ChEBI" id="CHEBI:64721"/>
        <dbReference type="ChEBI" id="CHEBI:78442"/>
        <dbReference type="ChEBI" id="CHEBI:78494"/>
        <dbReference type="ChEBI" id="CHEBI:133041"/>
        <dbReference type="EC" id="2.3.2.29"/>
    </reaction>
</comment>
<comment type="catalytic activity">
    <reaction evidence="1">
        <text>N-terminal L-aspartyl-[protein] + L-leucyl-tRNA(Leu) = N-terminal L-leucyl-L-aspartyl-[protein] + tRNA(Leu) + H(+)</text>
        <dbReference type="Rhea" id="RHEA:50420"/>
        <dbReference type="Rhea" id="RHEA-COMP:9613"/>
        <dbReference type="Rhea" id="RHEA-COMP:9622"/>
        <dbReference type="Rhea" id="RHEA-COMP:12669"/>
        <dbReference type="Rhea" id="RHEA-COMP:12674"/>
        <dbReference type="ChEBI" id="CHEBI:15378"/>
        <dbReference type="ChEBI" id="CHEBI:64720"/>
        <dbReference type="ChEBI" id="CHEBI:78442"/>
        <dbReference type="ChEBI" id="CHEBI:78494"/>
        <dbReference type="ChEBI" id="CHEBI:133042"/>
        <dbReference type="EC" id="2.3.2.29"/>
    </reaction>
</comment>
<comment type="subcellular location">
    <subcellularLocation>
        <location evidence="1">Cytoplasm</location>
    </subcellularLocation>
</comment>
<comment type="similarity">
    <text evidence="1">Belongs to the R-transferase family. Bpt subfamily.</text>
</comment>
<comment type="sequence caution" evidence="2">
    <conflict type="erroneous initiation">
        <sequence resource="EMBL-CDS" id="CAJ22904"/>
    </conflict>
</comment>
<keyword id="KW-0012">Acyltransferase</keyword>
<keyword id="KW-0963">Cytoplasm</keyword>
<keyword id="KW-0808">Transferase</keyword>
<organism>
    <name type="scientific">Xanthomonas euvesicatoria pv. vesicatoria (strain 85-10)</name>
    <name type="common">Xanthomonas campestris pv. vesicatoria</name>
    <dbReference type="NCBI Taxonomy" id="316273"/>
    <lineage>
        <taxon>Bacteria</taxon>
        <taxon>Pseudomonadati</taxon>
        <taxon>Pseudomonadota</taxon>
        <taxon>Gammaproteobacteria</taxon>
        <taxon>Lysobacterales</taxon>
        <taxon>Lysobacteraceae</taxon>
        <taxon>Xanthomonas</taxon>
    </lineage>
</organism>
<protein>
    <recommendedName>
        <fullName evidence="1">Aspartate/glutamate leucyltransferase</fullName>
        <ecNumber evidence="1">2.3.2.29</ecNumber>
    </recommendedName>
</protein>
<evidence type="ECO:0000255" key="1">
    <source>
        <dbReference type="HAMAP-Rule" id="MF_00689"/>
    </source>
</evidence>
<evidence type="ECO:0000305" key="2"/>
<sequence>MAIHADTHDDLRLFQTGEHACGYWSDRQARDLVLDPHDPRLGAIYPQALAWGFRRSGDLVYRPHCERCRACVPVRIAVAAFHPDRSQRRCLARNQDLVVRVVAAERTDEQLALYRHYLKHRHPGGGMDEHGATEFDQFLIGGWSHGRFLEIREPAIAHLPGRLLAVAVTDVTGHALSAVYTFYTPEAAARSLGTFAILQQIQWAQRERRAHLYLGYWIDGHAKMNYKRRFSALEAYDGRHWRGLPAHASVD</sequence>
<reference key="1">
    <citation type="journal article" date="2005" name="J. Bacteriol.">
        <title>Insights into genome plasticity and pathogenicity of the plant pathogenic Bacterium Xanthomonas campestris pv. vesicatoria revealed by the complete genome sequence.</title>
        <authorList>
            <person name="Thieme F."/>
            <person name="Koebnik R."/>
            <person name="Bekel T."/>
            <person name="Berger C."/>
            <person name="Boch J."/>
            <person name="Buettner D."/>
            <person name="Caldana C."/>
            <person name="Gaigalat L."/>
            <person name="Goesmann A."/>
            <person name="Kay S."/>
            <person name="Kirchner O."/>
            <person name="Lanz C."/>
            <person name="Linke B."/>
            <person name="McHardy A.C."/>
            <person name="Meyer F."/>
            <person name="Mittenhuber G."/>
            <person name="Nies D.H."/>
            <person name="Niesbach-Kloesgen U."/>
            <person name="Patschkowski T."/>
            <person name="Rueckert C."/>
            <person name="Rupp O."/>
            <person name="Schneiker S."/>
            <person name="Schuster S.C."/>
            <person name="Vorhoelter F.J."/>
            <person name="Weber E."/>
            <person name="Puehler A."/>
            <person name="Bonas U."/>
            <person name="Bartels D."/>
            <person name="Kaiser O."/>
        </authorList>
    </citation>
    <scope>NUCLEOTIDE SEQUENCE [LARGE SCALE GENOMIC DNA]</scope>
    <source>
        <strain>85-10</strain>
    </source>
</reference>
<name>BPT_XANE5</name>
<proteinExistence type="inferred from homology"/>
<dbReference type="EC" id="2.3.2.29" evidence="1"/>
<dbReference type="EMBL" id="AM039952">
    <property type="protein sequence ID" value="CAJ22904.1"/>
    <property type="status" value="ALT_INIT"/>
    <property type="molecule type" value="Genomic_DNA"/>
</dbReference>
<dbReference type="SMR" id="Q3BW59"/>
<dbReference type="STRING" id="456327.BJD11_16245"/>
<dbReference type="KEGG" id="xcv:XCV1273"/>
<dbReference type="eggNOG" id="COG2935">
    <property type="taxonomic scope" value="Bacteria"/>
</dbReference>
<dbReference type="HOGENOM" id="CLU_077607_0_0_6"/>
<dbReference type="Proteomes" id="UP000007069">
    <property type="component" value="Chromosome"/>
</dbReference>
<dbReference type="GO" id="GO:0005737">
    <property type="term" value="C:cytoplasm"/>
    <property type="evidence" value="ECO:0007669"/>
    <property type="project" value="UniProtKB-SubCell"/>
</dbReference>
<dbReference type="GO" id="GO:0004057">
    <property type="term" value="F:arginyl-tRNA--protein transferase activity"/>
    <property type="evidence" value="ECO:0007669"/>
    <property type="project" value="InterPro"/>
</dbReference>
<dbReference type="GO" id="GO:0008914">
    <property type="term" value="F:leucyl-tRNA--protein transferase activity"/>
    <property type="evidence" value="ECO:0007669"/>
    <property type="project" value="UniProtKB-UniRule"/>
</dbReference>
<dbReference type="GO" id="GO:0071596">
    <property type="term" value="P:ubiquitin-dependent protein catabolic process via the N-end rule pathway"/>
    <property type="evidence" value="ECO:0007669"/>
    <property type="project" value="InterPro"/>
</dbReference>
<dbReference type="HAMAP" id="MF_00689">
    <property type="entry name" value="Bpt"/>
    <property type="match status" value="1"/>
</dbReference>
<dbReference type="InterPro" id="IPR016181">
    <property type="entry name" value="Acyl_CoA_acyltransferase"/>
</dbReference>
<dbReference type="InterPro" id="IPR017138">
    <property type="entry name" value="Asp_Glu_LeuTrfase"/>
</dbReference>
<dbReference type="InterPro" id="IPR030700">
    <property type="entry name" value="N-end_Aminoacyl_Trfase"/>
</dbReference>
<dbReference type="InterPro" id="IPR007472">
    <property type="entry name" value="N-end_Aminoacyl_Trfase_C"/>
</dbReference>
<dbReference type="InterPro" id="IPR007471">
    <property type="entry name" value="N-end_Aminoacyl_Trfase_N"/>
</dbReference>
<dbReference type="NCBIfam" id="NF002341">
    <property type="entry name" value="PRK01305.1-1"/>
    <property type="match status" value="1"/>
</dbReference>
<dbReference type="NCBIfam" id="NF002342">
    <property type="entry name" value="PRK01305.1-3"/>
    <property type="match status" value="1"/>
</dbReference>
<dbReference type="NCBIfam" id="NF002346">
    <property type="entry name" value="PRK01305.2-3"/>
    <property type="match status" value="1"/>
</dbReference>
<dbReference type="PANTHER" id="PTHR21367">
    <property type="entry name" value="ARGININE-TRNA-PROTEIN TRANSFERASE 1"/>
    <property type="match status" value="1"/>
</dbReference>
<dbReference type="PANTHER" id="PTHR21367:SF1">
    <property type="entry name" value="ARGINYL-TRNA--PROTEIN TRANSFERASE 1"/>
    <property type="match status" value="1"/>
</dbReference>
<dbReference type="Pfam" id="PF04377">
    <property type="entry name" value="ATE_C"/>
    <property type="match status" value="1"/>
</dbReference>
<dbReference type="Pfam" id="PF04376">
    <property type="entry name" value="ATE_N"/>
    <property type="match status" value="1"/>
</dbReference>
<dbReference type="PIRSF" id="PIRSF037208">
    <property type="entry name" value="ATE_pro_prd"/>
    <property type="match status" value="1"/>
</dbReference>
<dbReference type="SUPFAM" id="SSF55729">
    <property type="entry name" value="Acyl-CoA N-acyltransferases (Nat)"/>
    <property type="match status" value="1"/>
</dbReference>
<gene>
    <name evidence="1" type="primary">bpt</name>
    <name type="ordered locus">XCV1273</name>
</gene>
<accession>Q3BW59</accession>
<feature type="chain" id="PRO_0000263223" description="Aspartate/glutamate leucyltransferase">
    <location>
        <begin position="1"/>
        <end position="251"/>
    </location>
</feature>